<evidence type="ECO:0000255" key="1">
    <source>
        <dbReference type="HAMAP-Rule" id="MF_00115"/>
    </source>
</evidence>
<proteinExistence type="inferred from homology"/>
<keyword id="KW-0997">Cell inner membrane</keyword>
<keyword id="KW-1003">Cell membrane</keyword>
<keyword id="KW-0407">Ion channel</keyword>
<keyword id="KW-0406">Ion transport</keyword>
<keyword id="KW-0472">Membrane</keyword>
<keyword id="KW-1185">Reference proteome</keyword>
<keyword id="KW-0812">Transmembrane</keyword>
<keyword id="KW-1133">Transmembrane helix</keyword>
<keyword id="KW-0813">Transport</keyword>
<accession>A8LLI0</accession>
<reference key="1">
    <citation type="journal article" date="2010" name="ISME J.">
        <title>The complete genome sequence of the algal symbiont Dinoroseobacter shibae: a hitchhiker's guide to life in the sea.</title>
        <authorList>
            <person name="Wagner-Dobler I."/>
            <person name="Ballhausen B."/>
            <person name="Berger M."/>
            <person name="Brinkhoff T."/>
            <person name="Buchholz I."/>
            <person name="Bunk B."/>
            <person name="Cypionka H."/>
            <person name="Daniel R."/>
            <person name="Drepper T."/>
            <person name="Gerdts G."/>
            <person name="Hahnke S."/>
            <person name="Han C."/>
            <person name="Jahn D."/>
            <person name="Kalhoefer D."/>
            <person name="Kiss H."/>
            <person name="Klenk H.P."/>
            <person name="Kyrpides N."/>
            <person name="Liebl W."/>
            <person name="Liesegang H."/>
            <person name="Meincke L."/>
            <person name="Pati A."/>
            <person name="Petersen J."/>
            <person name="Piekarski T."/>
            <person name="Pommerenke C."/>
            <person name="Pradella S."/>
            <person name="Pukall R."/>
            <person name="Rabus R."/>
            <person name="Stackebrandt E."/>
            <person name="Thole S."/>
            <person name="Thompson L."/>
            <person name="Tielen P."/>
            <person name="Tomasch J."/>
            <person name="von Jan M."/>
            <person name="Wanphrut N."/>
            <person name="Wichels A."/>
            <person name="Zech H."/>
            <person name="Simon M."/>
        </authorList>
    </citation>
    <scope>NUCLEOTIDE SEQUENCE [LARGE SCALE GENOMIC DNA]</scope>
    <source>
        <strain>DSM 16493 / NCIMB 14021 / DFL 12</strain>
    </source>
</reference>
<gene>
    <name evidence="1" type="primary">mscL</name>
    <name type="ordered locus">Dshi_0241</name>
</gene>
<name>MSCL_DINSH</name>
<dbReference type="EMBL" id="CP000830">
    <property type="protein sequence ID" value="ABV91990.1"/>
    <property type="molecule type" value="Genomic_DNA"/>
</dbReference>
<dbReference type="RefSeq" id="WP_012176923.1">
    <property type="nucleotide sequence ID" value="NC_009952.1"/>
</dbReference>
<dbReference type="SMR" id="A8LLI0"/>
<dbReference type="STRING" id="398580.Dshi_0241"/>
<dbReference type="KEGG" id="dsh:Dshi_0241"/>
<dbReference type="eggNOG" id="COG1970">
    <property type="taxonomic scope" value="Bacteria"/>
</dbReference>
<dbReference type="HOGENOM" id="CLU_095787_0_0_5"/>
<dbReference type="OrthoDB" id="9810350at2"/>
<dbReference type="Proteomes" id="UP000006833">
    <property type="component" value="Chromosome"/>
</dbReference>
<dbReference type="GO" id="GO:0005886">
    <property type="term" value="C:plasma membrane"/>
    <property type="evidence" value="ECO:0007669"/>
    <property type="project" value="UniProtKB-SubCell"/>
</dbReference>
<dbReference type="GO" id="GO:0008381">
    <property type="term" value="F:mechanosensitive monoatomic ion channel activity"/>
    <property type="evidence" value="ECO:0007669"/>
    <property type="project" value="UniProtKB-UniRule"/>
</dbReference>
<dbReference type="Gene3D" id="1.10.1200.120">
    <property type="entry name" value="Large-conductance mechanosensitive channel, MscL, domain 1"/>
    <property type="match status" value="1"/>
</dbReference>
<dbReference type="HAMAP" id="MF_00115">
    <property type="entry name" value="MscL"/>
    <property type="match status" value="1"/>
</dbReference>
<dbReference type="InterPro" id="IPR019823">
    <property type="entry name" value="Mechanosensitive_channel_CS"/>
</dbReference>
<dbReference type="InterPro" id="IPR001185">
    <property type="entry name" value="MS_channel"/>
</dbReference>
<dbReference type="InterPro" id="IPR037673">
    <property type="entry name" value="MSC/AndL"/>
</dbReference>
<dbReference type="InterPro" id="IPR036019">
    <property type="entry name" value="MscL_channel"/>
</dbReference>
<dbReference type="NCBIfam" id="TIGR00220">
    <property type="entry name" value="mscL"/>
    <property type="match status" value="1"/>
</dbReference>
<dbReference type="NCBIfam" id="NF001843">
    <property type="entry name" value="PRK00567.1-4"/>
    <property type="match status" value="1"/>
</dbReference>
<dbReference type="PANTHER" id="PTHR30266:SF2">
    <property type="entry name" value="LARGE-CONDUCTANCE MECHANOSENSITIVE CHANNEL"/>
    <property type="match status" value="1"/>
</dbReference>
<dbReference type="PANTHER" id="PTHR30266">
    <property type="entry name" value="MECHANOSENSITIVE CHANNEL MSCL"/>
    <property type="match status" value="1"/>
</dbReference>
<dbReference type="Pfam" id="PF01741">
    <property type="entry name" value="MscL"/>
    <property type="match status" value="1"/>
</dbReference>
<dbReference type="PRINTS" id="PR01264">
    <property type="entry name" value="MECHCHANNEL"/>
</dbReference>
<dbReference type="SUPFAM" id="SSF81330">
    <property type="entry name" value="Gated mechanosensitive channel"/>
    <property type="match status" value="1"/>
</dbReference>
<dbReference type="PROSITE" id="PS01327">
    <property type="entry name" value="MSCL"/>
    <property type="match status" value="1"/>
</dbReference>
<comment type="function">
    <text evidence="1">Channel that opens in response to stretch forces in the membrane lipid bilayer. May participate in the regulation of osmotic pressure changes within the cell.</text>
</comment>
<comment type="subunit">
    <text evidence="1">Homopentamer.</text>
</comment>
<comment type="subcellular location">
    <subcellularLocation>
        <location evidence="1">Cell inner membrane</location>
        <topology evidence="1">Multi-pass membrane protein</topology>
    </subcellularLocation>
</comment>
<comment type="similarity">
    <text evidence="1">Belongs to the MscL family.</text>
</comment>
<organism>
    <name type="scientific">Dinoroseobacter shibae (strain DSM 16493 / NCIMB 14021 / DFL 12)</name>
    <dbReference type="NCBI Taxonomy" id="398580"/>
    <lineage>
        <taxon>Bacteria</taxon>
        <taxon>Pseudomonadati</taxon>
        <taxon>Pseudomonadota</taxon>
        <taxon>Alphaproteobacteria</taxon>
        <taxon>Rhodobacterales</taxon>
        <taxon>Roseobacteraceae</taxon>
        <taxon>Dinoroseobacter</taxon>
    </lineage>
</organism>
<sequence>MLNEFKQFIAKGNVMDMAVGIIIGAAFTAIVTSLVEDLINPIISLFTGGLDFSGLGLALTEGEEAAVFAYGNFIMAVINFLIIAWVVFLLVKMVNRIKEMAENEPEEAPAEDPGPTEKELLMQIRDSLAKS</sequence>
<protein>
    <recommendedName>
        <fullName evidence="1">Large-conductance mechanosensitive channel</fullName>
    </recommendedName>
</protein>
<feature type="chain" id="PRO_1000076039" description="Large-conductance mechanosensitive channel">
    <location>
        <begin position="1"/>
        <end position="131"/>
    </location>
</feature>
<feature type="transmembrane region" description="Helical" evidence="1">
    <location>
        <begin position="14"/>
        <end position="34"/>
    </location>
</feature>
<feature type="transmembrane region" description="Helical" evidence="1">
    <location>
        <begin position="71"/>
        <end position="91"/>
    </location>
</feature>